<keyword id="KW-0687">Ribonucleoprotein</keyword>
<keyword id="KW-0689">Ribosomal protein</keyword>
<keyword id="KW-0694">RNA-binding</keyword>
<keyword id="KW-0699">rRNA-binding</keyword>
<accession>A8M510</accession>
<evidence type="ECO:0000255" key="1">
    <source>
        <dbReference type="HAMAP-Rule" id="MF_01341"/>
    </source>
</evidence>
<evidence type="ECO:0000256" key="2">
    <source>
        <dbReference type="SAM" id="MobiDB-lite"/>
    </source>
</evidence>
<evidence type="ECO:0000305" key="3"/>
<reference key="1">
    <citation type="submission" date="2007-10" db="EMBL/GenBank/DDBJ databases">
        <title>Complete sequence of Salinispora arenicola CNS-205.</title>
        <authorList>
            <consortium name="US DOE Joint Genome Institute"/>
            <person name="Copeland A."/>
            <person name="Lucas S."/>
            <person name="Lapidus A."/>
            <person name="Barry K."/>
            <person name="Glavina del Rio T."/>
            <person name="Dalin E."/>
            <person name="Tice H."/>
            <person name="Pitluck S."/>
            <person name="Foster B."/>
            <person name="Schmutz J."/>
            <person name="Larimer F."/>
            <person name="Land M."/>
            <person name="Hauser L."/>
            <person name="Kyrpides N."/>
            <person name="Ivanova N."/>
            <person name="Jensen P.R."/>
            <person name="Moore B.S."/>
            <person name="Penn K."/>
            <person name="Jenkins C."/>
            <person name="Udwary D."/>
            <person name="Xiang L."/>
            <person name="Gontang E."/>
            <person name="Richardson P."/>
        </authorList>
    </citation>
    <scope>NUCLEOTIDE SEQUENCE [LARGE SCALE GENOMIC DNA]</scope>
    <source>
        <strain>CNS-205</strain>
    </source>
</reference>
<gene>
    <name evidence="1" type="primary">rplO</name>
    <name type="ordered locus">Sare_4296</name>
</gene>
<sequence>MTIKVHHLRPAPGAKTAKTRVGRGEGSKGKTAGRGTKGSKARKNISAAFEGGQMPIHMRLPKMKGFKNKFKVTFQVVNLERLAELFPNGGQVGPAELVDAGAVRKGQPVKVLGTGDLGGVALQVSAHAFSASAKEKITAAGGSTTEL</sequence>
<organism>
    <name type="scientific">Salinispora arenicola (strain CNS-205)</name>
    <dbReference type="NCBI Taxonomy" id="391037"/>
    <lineage>
        <taxon>Bacteria</taxon>
        <taxon>Bacillati</taxon>
        <taxon>Actinomycetota</taxon>
        <taxon>Actinomycetes</taxon>
        <taxon>Micromonosporales</taxon>
        <taxon>Micromonosporaceae</taxon>
        <taxon>Salinispora</taxon>
    </lineage>
</organism>
<protein>
    <recommendedName>
        <fullName evidence="1">Large ribosomal subunit protein uL15</fullName>
    </recommendedName>
    <alternativeName>
        <fullName evidence="3">50S ribosomal protein L15</fullName>
    </alternativeName>
</protein>
<feature type="chain" id="PRO_1000086726" description="Large ribosomal subunit protein uL15">
    <location>
        <begin position="1"/>
        <end position="147"/>
    </location>
</feature>
<feature type="region of interest" description="Disordered" evidence="2">
    <location>
        <begin position="1"/>
        <end position="42"/>
    </location>
</feature>
<proteinExistence type="inferred from homology"/>
<name>RL15_SALAI</name>
<dbReference type="EMBL" id="CP000850">
    <property type="protein sequence ID" value="ABW00078.1"/>
    <property type="molecule type" value="Genomic_DNA"/>
</dbReference>
<dbReference type="SMR" id="A8M510"/>
<dbReference type="STRING" id="391037.Sare_4296"/>
<dbReference type="KEGG" id="saq:Sare_4296"/>
<dbReference type="PATRIC" id="fig|391037.6.peg.4337"/>
<dbReference type="eggNOG" id="COG0200">
    <property type="taxonomic scope" value="Bacteria"/>
</dbReference>
<dbReference type="HOGENOM" id="CLU_055188_4_1_11"/>
<dbReference type="OrthoDB" id="9810293at2"/>
<dbReference type="GO" id="GO:0022625">
    <property type="term" value="C:cytosolic large ribosomal subunit"/>
    <property type="evidence" value="ECO:0007669"/>
    <property type="project" value="TreeGrafter"/>
</dbReference>
<dbReference type="GO" id="GO:0019843">
    <property type="term" value="F:rRNA binding"/>
    <property type="evidence" value="ECO:0007669"/>
    <property type="project" value="UniProtKB-UniRule"/>
</dbReference>
<dbReference type="GO" id="GO:0003735">
    <property type="term" value="F:structural constituent of ribosome"/>
    <property type="evidence" value="ECO:0007669"/>
    <property type="project" value="InterPro"/>
</dbReference>
<dbReference type="GO" id="GO:0006412">
    <property type="term" value="P:translation"/>
    <property type="evidence" value="ECO:0007669"/>
    <property type="project" value="UniProtKB-UniRule"/>
</dbReference>
<dbReference type="FunFam" id="3.100.10.10:FF:000005">
    <property type="entry name" value="50S ribosomal protein L15"/>
    <property type="match status" value="1"/>
</dbReference>
<dbReference type="Gene3D" id="3.100.10.10">
    <property type="match status" value="1"/>
</dbReference>
<dbReference type="HAMAP" id="MF_01341">
    <property type="entry name" value="Ribosomal_uL15"/>
    <property type="match status" value="1"/>
</dbReference>
<dbReference type="InterPro" id="IPR030878">
    <property type="entry name" value="Ribosomal_uL15"/>
</dbReference>
<dbReference type="InterPro" id="IPR021131">
    <property type="entry name" value="Ribosomal_uL15/eL18"/>
</dbReference>
<dbReference type="InterPro" id="IPR036227">
    <property type="entry name" value="Ribosomal_uL15/eL18_sf"/>
</dbReference>
<dbReference type="InterPro" id="IPR005749">
    <property type="entry name" value="Ribosomal_uL15_bac-type"/>
</dbReference>
<dbReference type="InterPro" id="IPR001196">
    <property type="entry name" value="Ribosomal_uL15_CS"/>
</dbReference>
<dbReference type="NCBIfam" id="TIGR01071">
    <property type="entry name" value="rplO_bact"/>
    <property type="match status" value="1"/>
</dbReference>
<dbReference type="PANTHER" id="PTHR12934">
    <property type="entry name" value="50S RIBOSOMAL PROTEIN L15"/>
    <property type="match status" value="1"/>
</dbReference>
<dbReference type="PANTHER" id="PTHR12934:SF11">
    <property type="entry name" value="LARGE RIBOSOMAL SUBUNIT PROTEIN UL15M"/>
    <property type="match status" value="1"/>
</dbReference>
<dbReference type="Pfam" id="PF00828">
    <property type="entry name" value="Ribosomal_L27A"/>
    <property type="match status" value="1"/>
</dbReference>
<dbReference type="SUPFAM" id="SSF52080">
    <property type="entry name" value="Ribosomal proteins L15p and L18e"/>
    <property type="match status" value="1"/>
</dbReference>
<dbReference type="PROSITE" id="PS00475">
    <property type="entry name" value="RIBOSOMAL_L15"/>
    <property type="match status" value="1"/>
</dbReference>
<comment type="function">
    <text evidence="1">Binds to the 23S rRNA.</text>
</comment>
<comment type="subunit">
    <text evidence="1">Part of the 50S ribosomal subunit.</text>
</comment>
<comment type="similarity">
    <text evidence="1">Belongs to the universal ribosomal protein uL15 family.</text>
</comment>